<evidence type="ECO:0000255" key="1">
    <source>
        <dbReference type="HAMAP-Rule" id="MF_00605"/>
    </source>
</evidence>
<accession>Q1RH66</accession>
<protein>
    <recommendedName>
        <fullName evidence="1">tRNA (guanine-N(1)-)-methyltransferase</fullName>
        <ecNumber evidence="1">2.1.1.228</ecNumber>
    </recommendedName>
    <alternativeName>
        <fullName evidence="1">M1G-methyltransferase</fullName>
    </alternativeName>
    <alternativeName>
        <fullName evidence="1">tRNA [GM37] methyltransferase</fullName>
    </alternativeName>
</protein>
<name>TRMD_RICBR</name>
<keyword id="KW-0963">Cytoplasm</keyword>
<keyword id="KW-0489">Methyltransferase</keyword>
<keyword id="KW-0949">S-adenosyl-L-methionine</keyword>
<keyword id="KW-0808">Transferase</keyword>
<keyword id="KW-0819">tRNA processing</keyword>
<sequence>MSRLHATILTVFPEMFPGTLGHSLAGQALQKNIWSYDVINIRDFGLTKHKNVDDEAYGGGDGLIMRPDVLGNAIDHALSLNPRAKIYYPSPRGKVFTQGFAKEILRDIQLNSESFRQDEFKEEPAEHIIIREQRRMPQNSLVSSLLNDAVNMIFLCGRYEGIDERVIEEYNITEISVGDYILSGGEIPTLTILDCLIRLLPGVLMNQNTLASESFEKDGEFEGGLECGLYTRPEVWYNRKVPSVLLSGNHKLINEWKKEQSLMITKLRRPELLKDLRDKERS</sequence>
<organism>
    <name type="scientific">Rickettsia bellii (strain RML369-C)</name>
    <dbReference type="NCBI Taxonomy" id="336407"/>
    <lineage>
        <taxon>Bacteria</taxon>
        <taxon>Pseudomonadati</taxon>
        <taxon>Pseudomonadota</taxon>
        <taxon>Alphaproteobacteria</taxon>
        <taxon>Rickettsiales</taxon>
        <taxon>Rickettsiaceae</taxon>
        <taxon>Rickettsieae</taxon>
        <taxon>Rickettsia</taxon>
        <taxon>belli group</taxon>
    </lineage>
</organism>
<comment type="function">
    <text evidence="1">Specifically methylates guanosine-37 in various tRNAs.</text>
</comment>
<comment type="catalytic activity">
    <reaction evidence="1">
        <text>guanosine(37) in tRNA + S-adenosyl-L-methionine = N(1)-methylguanosine(37) in tRNA + S-adenosyl-L-homocysteine + H(+)</text>
        <dbReference type="Rhea" id="RHEA:36899"/>
        <dbReference type="Rhea" id="RHEA-COMP:10145"/>
        <dbReference type="Rhea" id="RHEA-COMP:10147"/>
        <dbReference type="ChEBI" id="CHEBI:15378"/>
        <dbReference type="ChEBI" id="CHEBI:57856"/>
        <dbReference type="ChEBI" id="CHEBI:59789"/>
        <dbReference type="ChEBI" id="CHEBI:73542"/>
        <dbReference type="ChEBI" id="CHEBI:74269"/>
        <dbReference type="EC" id="2.1.1.228"/>
    </reaction>
</comment>
<comment type="subunit">
    <text evidence="1">Homodimer.</text>
</comment>
<comment type="subcellular location">
    <subcellularLocation>
        <location evidence="1">Cytoplasm</location>
    </subcellularLocation>
</comment>
<comment type="similarity">
    <text evidence="1">Belongs to the RNA methyltransferase TrmD family.</text>
</comment>
<reference key="1">
    <citation type="journal article" date="2006" name="PLoS Genet.">
        <title>Genome sequence of Rickettsia bellii illuminates the role of amoebae in gene exchanges between intracellular pathogens.</title>
        <authorList>
            <person name="Ogata H."/>
            <person name="La Scola B."/>
            <person name="Audic S."/>
            <person name="Renesto P."/>
            <person name="Blanc G."/>
            <person name="Robert C."/>
            <person name="Fournier P.-E."/>
            <person name="Claverie J.-M."/>
            <person name="Raoult D."/>
        </authorList>
    </citation>
    <scope>NUCLEOTIDE SEQUENCE [LARGE SCALE GENOMIC DNA]</scope>
    <source>
        <strain>RML369-C</strain>
    </source>
</reference>
<dbReference type="EC" id="2.1.1.228" evidence="1"/>
<dbReference type="EMBL" id="CP000087">
    <property type="protein sequence ID" value="ABE05298.1"/>
    <property type="molecule type" value="Genomic_DNA"/>
</dbReference>
<dbReference type="SMR" id="Q1RH66"/>
<dbReference type="KEGG" id="rbe:RBE_1217"/>
<dbReference type="eggNOG" id="COG0336">
    <property type="taxonomic scope" value="Bacteria"/>
</dbReference>
<dbReference type="HOGENOM" id="CLU_047363_0_1_5"/>
<dbReference type="OrthoDB" id="9807416at2"/>
<dbReference type="Proteomes" id="UP000001951">
    <property type="component" value="Chromosome"/>
</dbReference>
<dbReference type="GO" id="GO:0005829">
    <property type="term" value="C:cytosol"/>
    <property type="evidence" value="ECO:0007669"/>
    <property type="project" value="TreeGrafter"/>
</dbReference>
<dbReference type="GO" id="GO:0052906">
    <property type="term" value="F:tRNA (guanine(37)-N1)-methyltransferase activity"/>
    <property type="evidence" value="ECO:0007669"/>
    <property type="project" value="UniProtKB-UniRule"/>
</dbReference>
<dbReference type="GO" id="GO:0002939">
    <property type="term" value="P:tRNA N1-guanine methylation"/>
    <property type="evidence" value="ECO:0007669"/>
    <property type="project" value="TreeGrafter"/>
</dbReference>
<dbReference type="CDD" id="cd18080">
    <property type="entry name" value="TrmD-like"/>
    <property type="match status" value="1"/>
</dbReference>
<dbReference type="Gene3D" id="3.40.1280.10">
    <property type="match status" value="2"/>
</dbReference>
<dbReference type="Gene3D" id="1.10.1270.20">
    <property type="entry name" value="tRNA(m1g37)methyltransferase, domain 2"/>
    <property type="match status" value="1"/>
</dbReference>
<dbReference type="HAMAP" id="MF_00605">
    <property type="entry name" value="TrmD"/>
    <property type="match status" value="1"/>
</dbReference>
<dbReference type="InterPro" id="IPR029028">
    <property type="entry name" value="Alpha/beta_knot_MTases"/>
</dbReference>
<dbReference type="InterPro" id="IPR022437">
    <property type="entry name" value="RPE3"/>
</dbReference>
<dbReference type="InterPro" id="IPR023148">
    <property type="entry name" value="tRNA_m1G_MeTrfase_C_sf"/>
</dbReference>
<dbReference type="InterPro" id="IPR002649">
    <property type="entry name" value="tRNA_m1G_MeTrfase_TrmD"/>
</dbReference>
<dbReference type="InterPro" id="IPR029026">
    <property type="entry name" value="tRNA_m1G_MTases_N"/>
</dbReference>
<dbReference type="InterPro" id="IPR016009">
    <property type="entry name" value="tRNA_MeTrfase_TRMD/TRM10"/>
</dbReference>
<dbReference type="NCBIfam" id="TIGR03775">
    <property type="entry name" value="RPE3"/>
    <property type="match status" value="1"/>
</dbReference>
<dbReference type="PANTHER" id="PTHR46417">
    <property type="entry name" value="TRNA (GUANINE-N(1)-)-METHYLTRANSFERASE"/>
    <property type="match status" value="1"/>
</dbReference>
<dbReference type="PANTHER" id="PTHR46417:SF1">
    <property type="entry name" value="TRNA (GUANINE-N(1)-)-METHYLTRANSFERASE"/>
    <property type="match status" value="1"/>
</dbReference>
<dbReference type="Pfam" id="PF01746">
    <property type="entry name" value="tRNA_m1G_MT"/>
    <property type="match status" value="2"/>
</dbReference>
<dbReference type="PIRSF" id="PIRSF000386">
    <property type="entry name" value="tRNA_mtase"/>
    <property type="match status" value="1"/>
</dbReference>
<dbReference type="SUPFAM" id="SSF75217">
    <property type="entry name" value="alpha/beta knot"/>
    <property type="match status" value="2"/>
</dbReference>
<feature type="chain" id="PRO_0000257463" description="tRNA (guanine-N(1)-)-methyltransferase">
    <location>
        <begin position="1"/>
        <end position="282"/>
    </location>
</feature>
<feature type="binding site" evidence="1">
    <location>
        <position position="157"/>
    </location>
    <ligand>
        <name>S-adenosyl-L-methionine</name>
        <dbReference type="ChEBI" id="CHEBI:59789"/>
    </ligand>
</feature>
<feature type="binding site" evidence="1">
    <location>
        <begin position="177"/>
        <end position="182"/>
    </location>
    <ligand>
        <name>S-adenosyl-L-methionine</name>
        <dbReference type="ChEBI" id="CHEBI:59789"/>
    </ligand>
</feature>
<gene>
    <name evidence="1" type="primary">trmD</name>
    <name type="ordered locus">RBE_1217</name>
</gene>
<proteinExistence type="inferred from homology"/>